<keyword id="KW-0997">Cell inner membrane</keyword>
<keyword id="KW-1003">Cell membrane</keyword>
<keyword id="KW-0472">Membrane</keyword>
<keyword id="KW-0812">Transmembrane</keyword>
<keyword id="KW-1133">Transmembrane helix</keyword>
<feature type="chain" id="PRO_1000045558" description="Fumarate reductase subunit D">
    <location>
        <begin position="1"/>
        <end position="119"/>
    </location>
</feature>
<feature type="transmembrane region" description="Helical" evidence="1">
    <location>
        <begin position="25"/>
        <end position="45"/>
    </location>
</feature>
<feature type="transmembrane region" description="Helical" evidence="1">
    <location>
        <begin position="61"/>
        <end position="81"/>
    </location>
</feature>
<feature type="transmembrane region" description="Helical" evidence="1">
    <location>
        <begin position="99"/>
        <end position="119"/>
    </location>
</feature>
<evidence type="ECO:0000255" key="1">
    <source>
        <dbReference type="HAMAP-Rule" id="MF_00709"/>
    </source>
</evidence>
<gene>
    <name evidence="1" type="primary">frdD</name>
    <name type="ordered locus">SPA4157</name>
</gene>
<sequence>MINPNPKRSDEPVFWGLFGAGGMWGAIIAPVIVLLVGIMLPLGLFPGDALSFERVLTFTQSFIGRVFLFLMIVLPLWCGLHRMHHAMHDLKIHVPAGKWVFYGLAAILTVVTAIGVITL</sequence>
<organism>
    <name type="scientific">Salmonella paratyphi A (strain ATCC 9150 / SARB42)</name>
    <dbReference type="NCBI Taxonomy" id="295319"/>
    <lineage>
        <taxon>Bacteria</taxon>
        <taxon>Pseudomonadati</taxon>
        <taxon>Pseudomonadota</taxon>
        <taxon>Gammaproteobacteria</taxon>
        <taxon>Enterobacterales</taxon>
        <taxon>Enterobacteriaceae</taxon>
        <taxon>Salmonella</taxon>
    </lineage>
</organism>
<comment type="function">
    <text evidence="1">Two distinct, membrane-bound, FAD-containing enzymes are responsible for the catalysis of fumarate and succinate interconversion; fumarate reductase is used in anaerobic growth, and succinate dehydrogenase is used in aerobic growth. Anchors the catalytic components of the fumarate reductase complex to the cell inner membrane, binds quinones.</text>
</comment>
<comment type="subunit">
    <text evidence="1">Part of an enzyme complex containing four subunits: a flavoprotein (FrdA), an iron-sulfur protein (FrdB), and two hydrophobic anchor proteins (FrdC and FrdD).</text>
</comment>
<comment type="subcellular location">
    <subcellularLocation>
        <location evidence="1">Cell inner membrane</location>
        <topology evidence="1">Multi-pass membrane protein</topology>
    </subcellularLocation>
</comment>
<comment type="similarity">
    <text evidence="1">Belongs to the FrdD family.</text>
</comment>
<protein>
    <recommendedName>
        <fullName evidence="1">Fumarate reductase subunit D</fullName>
    </recommendedName>
    <alternativeName>
        <fullName evidence="1">Fumarate reductase 13 kDa hydrophobic protein</fullName>
    </alternativeName>
    <alternativeName>
        <fullName evidence="1">Quinol-fumarate reductase subunit D</fullName>
        <shortName evidence="1">QFR subunit D</shortName>
    </alternativeName>
</protein>
<name>FRDD_SALPA</name>
<accession>Q5PL71</accession>
<reference key="1">
    <citation type="journal article" date="2004" name="Nat. Genet.">
        <title>Comparison of genome degradation in Paratyphi A and Typhi, human-restricted serovars of Salmonella enterica that cause typhoid.</title>
        <authorList>
            <person name="McClelland M."/>
            <person name="Sanderson K.E."/>
            <person name="Clifton S.W."/>
            <person name="Latreille P."/>
            <person name="Porwollik S."/>
            <person name="Sabo A."/>
            <person name="Meyer R."/>
            <person name="Bieri T."/>
            <person name="Ozersky P."/>
            <person name="McLellan M."/>
            <person name="Harkins C.R."/>
            <person name="Wang C."/>
            <person name="Nguyen C."/>
            <person name="Berghoff A."/>
            <person name="Elliott G."/>
            <person name="Kohlberg S."/>
            <person name="Strong C."/>
            <person name="Du F."/>
            <person name="Carter J."/>
            <person name="Kremizki C."/>
            <person name="Layman D."/>
            <person name="Leonard S."/>
            <person name="Sun H."/>
            <person name="Fulton L."/>
            <person name="Nash W."/>
            <person name="Miner T."/>
            <person name="Minx P."/>
            <person name="Delehaunty K."/>
            <person name="Fronick C."/>
            <person name="Magrini V."/>
            <person name="Nhan M."/>
            <person name="Warren W."/>
            <person name="Florea L."/>
            <person name="Spieth J."/>
            <person name="Wilson R.K."/>
        </authorList>
    </citation>
    <scope>NUCLEOTIDE SEQUENCE [LARGE SCALE GENOMIC DNA]</scope>
    <source>
        <strain>ATCC 9150 / SARB42</strain>
    </source>
</reference>
<proteinExistence type="inferred from homology"/>
<dbReference type="EMBL" id="CP000026">
    <property type="protein sequence ID" value="AAV79898.1"/>
    <property type="molecule type" value="Genomic_DNA"/>
</dbReference>
<dbReference type="RefSeq" id="WP_000609652.1">
    <property type="nucleotide sequence ID" value="NC_006511.1"/>
</dbReference>
<dbReference type="SMR" id="Q5PL71"/>
<dbReference type="KEGG" id="spt:SPA4157"/>
<dbReference type="HOGENOM" id="CLU_168367_0_0_6"/>
<dbReference type="Proteomes" id="UP000008185">
    <property type="component" value="Chromosome"/>
</dbReference>
<dbReference type="GO" id="GO:0045283">
    <property type="term" value="C:fumarate reductase complex"/>
    <property type="evidence" value="ECO:0007669"/>
    <property type="project" value="UniProtKB-UniRule"/>
</dbReference>
<dbReference type="GO" id="GO:0005886">
    <property type="term" value="C:plasma membrane"/>
    <property type="evidence" value="ECO:0007669"/>
    <property type="project" value="UniProtKB-SubCell"/>
</dbReference>
<dbReference type="GO" id="GO:0000104">
    <property type="term" value="F:succinate dehydrogenase activity"/>
    <property type="evidence" value="ECO:0007669"/>
    <property type="project" value="UniProtKB-UniRule"/>
</dbReference>
<dbReference type="GO" id="GO:0006106">
    <property type="term" value="P:fumarate metabolic process"/>
    <property type="evidence" value="ECO:0007669"/>
    <property type="project" value="InterPro"/>
</dbReference>
<dbReference type="CDD" id="cd00547">
    <property type="entry name" value="QFR_TypeD_subunitD"/>
    <property type="match status" value="1"/>
</dbReference>
<dbReference type="FunFam" id="1.20.1300.10:FF:000002">
    <property type="entry name" value="Fumarate reductase subunit D"/>
    <property type="match status" value="1"/>
</dbReference>
<dbReference type="Gene3D" id="1.20.1300.10">
    <property type="entry name" value="Fumarate reductase/succinate dehydrogenase, transmembrane subunit"/>
    <property type="match status" value="1"/>
</dbReference>
<dbReference type="HAMAP" id="MF_00709">
    <property type="entry name" value="Fumarate_red_D"/>
    <property type="match status" value="1"/>
</dbReference>
<dbReference type="InterPro" id="IPR003418">
    <property type="entry name" value="Fumarate_red_D"/>
</dbReference>
<dbReference type="InterPro" id="IPR034804">
    <property type="entry name" value="SQR/QFR_C/D"/>
</dbReference>
<dbReference type="NCBIfam" id="NF003977">
    <property type="entry name" value="PRK05470.1-1"/>
    <property type="match status" value="1"/>
</dbReference>
<dbReference type="Pfam" id="PF02313">
    <property type="entry name" value="Fumarate_red_D"/>
    <property type="match status" value="1"/>
</dbReference>
<dbReference type="PIRSF" id="PIRSF000179">
    <property type="entry name" value="FrdD"/>
    <property type="match status" value="1"/>
</dbReference>
<dbReference type="SUPFAM" id="SSF81343">
    <property type="entry name" value="Fumarate reductase respiratory complex transmembrane subunits"/>
    <property type="match status" value="1"/>
</dbReference>